<comment type="function">
    <text evidence="1">Produces ATP from ADP in the presence of a proton gradient across the membrane. The catalytic sites are hosted primarily by the beta subunits.</text>
</comment>
<comment type="catalytic activity">
    <reaction evidence="1">
        <text>ATP + H2O + 4 H(+)(in) = ADP + phosphate + 5 H(+)(out)</text>
        <dbReference type="Rhea" id="RHEA:57720"/>
        <dbReference type="ChEBI" id="CHEBI:15377"/>
        <dbReference type="ChEBI" id="CHEBI:15378"/>
        <dbReference type="ChEBI" id="CHEBI:30616"/>
        <dbReference type="ChEBI" id="CHEBI:43474"/>
        <dbReference type="ChEBI" id="CHEBI:456216"/>
        <dbReference type="EC" id="7.1.2.2"/>
    </reaction>
</comment>
<comment type="subunit">
    <text evidence="1">F-type ATPases have 2 components, CF(1) - the catalytic core - and CF(0) - the membrane proton channel. CF(1) has five subunits: alpha(3), beta(3), gamma(1), delta(1), epsilon(1). CF(0) has three main subunits: a(1), b(2) and c(9-12). The alpha and beta chains form an alternating ring which encloses part of the gamma chain. CF(1) is attached to CF(0) by a central stalk formed by the gamma and epsilon chains, while a peripheral stalk is formed by the delta and b chains.</text>
</comment>
<comment type="subcellular location">
    <subcellularLocation>
        <location evidence="1">Cell membrane</location>
        <topology evidence="1">Peripheral membrane protein</topology>
    </subcellularLocation>
</comment>
<comment type="similarity">
    <text evidence="1">Belongs to the ATPase alpha/beta chains family.</text>
</comment>
<comment type="sequence caution" evidence="3">
    <conflict type="frameshift">
        <sequence resource="EMBL-CDS" id="AAS04768"/>
    </conflict>
</comment>
<feature type="chain" id="PRO_0000339548" description="ATP synthase subunit beta">
    <location>
        <begin position="1"/>
        <end position="485"/>
    </location>
</feature>
<feature type="region of interest" description="Disordered" evidence="2">
    <location>
        <begin position="1"/>
        <end position="20"/>
    </location>
</feature>
<feature type="compositionally biased region" description="Basic and acidic residues" evidence="2">
    <location>
        <begin position="1"/>
        <end position="11"/>
    </location>
</feature>
<feature type="binding site" evidence="1">
    <location>
        <begin position="170"/>
        <end position="177"/>
    </location>
    <ligand>
        <name>ATP</name>
        <dbReference type="ChEBI" id="CHEBI:30616"/>
    </ligand>
</feature>
<organism>
    <name type="scientific">Mycolicibacterium paratuberculosis (strain ATCC BAA-968 / K-10)</name>
    <name type="common">Mycobacterium paratuberculosis</name>
    <dbReference type="NCBI Taxonomy" id="262316"/>
    <lineage>
        <taxon>Bacteria</taxon>
        <taxon>Bacillati</taxon>
        <taxon>Actinomycetota</taxon>
        <taxon>Actinomycetes</taxon>
        <taxon>Mycobacteriales</taxon>
        <taxon>Mycobacteriaceae</taxon>
        <taxon>Mycobacterium</taxon>
        <taxon>Mycobacterium avium complex (MAC)</taxon>
    </lineage>
</organism>
<protein>
    <recommendedName>
        <fullName evidence="1">ATP synthase subunit beta</fullName>
        <ecNumber evidence="1">7.1.2.2</ecNumber>
    </recommendedName>
    <alternativeName>
        <fullName evidence="1">ATP synthase F1 sector subunit beta</fullName>
    </alternativeName>
    <alternativeName>
        <fullName evidence="1">F-ATPase subunit beta</fullName>
    </alternativeName>
</protein>
<name>ATPB_MYCPA</name>
<gene>
    <name evidence="1" type="primary">atpD</name>
    <name type="ordered locus">MAP_2451c</name>
</gene>
<proteinExistence type="inferred from homology"/>
<accession>Q73X59</accession>
<keyword id="KW-0066">ATP synthesis</keyword>
<keyword id="KW-0067">ATP-binding</keyword>
<keyword id="KW-1003">Cell membrane</keyword>
<keyword id="KW-0139">CF(1)</keyword>
<keyword id="KW-0375">Hydrogen ion transport</keyword>
<keyword id="KW-0406">Ion transport</keyword>
<keyword id="KW-0472">Membrane</keyword>
<keyword id="KW-0547">Nucleotide-binding</keyword>
<keyword id="KW-1185">Reference proteome</keyword>
<keyword id="KW-1278">Translocase</keyword>
<keyword id="KW-0813">Transport</keyword>
<evidence type="ECO:0000255" key="1">
    <source>
        <dbReference type="HAMAP-Rule" id="MF_01347"/>
    </source>
</evidence>
<evidence type="ECO:0000256" key="2">
    <source>
        <dbReference type="SAM" id="MobiDB-lite"/>
    </source>
</evidence>
<evidence type="ECO:0000305" key="3"/>
<sequence>MPATETADKNTKSANSDTSGRVVRVTGPVVDVEFPRGSVPDLFNALHAEITFEELAKTLTLEVAQHLGDNLVRTMSLQPTDGLVRGVEVIDTGRSISVPVGQEVKGHVFNALGHCLDKPGYGEDFEHWSIHRKPPPFEELEPRTEMLETGLKVVDLLTPYVRGGKIALFGGAGVGKTVLIQEMINRIARNFGGTSVFAGVGERTREGNDLWVELQEANVLKDTALVFGQMDEPPGTRMRVALSALTMAEWFRDEAGQDVLLFIDNIFRFTQAGSEVSTLLGRMPSAVGYQPTLADEMGELQERITSTRGRSITSMQAVYVPADDYTDPAPATTFAHLDATTELSRSVFSKGIFPAVDPLASSSTILDPGVVGEEHYRVAQEVIRILQRYKDLQDIIAILGIDELSEEDKQLVNRARRIERFLSQNMMAAEQFTGQPGSTVPLKETIEAFDRLTKGEFDHVPEQAFFLIGGLDDLAKKAESLGAKL</sequence>
<reference key="1">
    <citation type="journal article" date="2005" name="Proc. Natl. Acad. Sci. U.S.A.">
        <title>The complete genome sequence of Mycobacterium avium subspecies paratuberculosis.</title>
        <authorList>
            <person name="Li L."/>
            <person name="Bannantine J.P."/>
            <person name="Zhang Q."/>
            <person name="Amonsin A."/>
            <person name="May B.J."/>
            <person name="Alt D."/>
            <person name="Banerji N."/>
            <person name="Kanjilal S."/>
            <person name="Kapur V."/>
        </authorList>
    </citation>
    <scope>NUCLEOTIDE SEQUENCE [LARGE SCALE GENOMIC DNA]</scope>
    <source>
        <strain>ATCC BAA-968 / K-10</strain>
    </source>
</reference>
<dbReference type="EC" id="7.1.2.2" evidence="1"/>
<dbReference type="EMBL" id="AE016958">
    <property type="protein sequence ID" value="AAS04768.1"/>
    <property type="status" value="ALT_FRAME"/>
    <property type="molecule type" value="Genomic_DNA"/>
</dbReference>
<dbReference type="SMR" id="Q73X59"/>
<dbReference type="STRING" id="262316.MAP_2451c"/>
<dbReference type="KEGG" id="mpa:MAP_2451c"/>
<dbReference type="eggNOG" id="COG0055">
    <property type="taxonomic scope" value="Bacteria"/>
</dbReference>
<dbReference type="HOGENOM" id="CLU_022398_0_2_11"/>
<dbReference type="Proteomes" id="UP000000580">
    <property type="component" value="Chromosome"/>
</dbReference>
<dbReference type="GO" id="GO:0005886">
    <property type="term" value="C:plasma membrane"/>
    <property type="evidence" value="ECO:0007669"/>
    <property type="project" value="UniProtKB-SubCell"/>
</dbReference>
<dbReference type="GO" id="GO:0045259">
    <property type="term" value="C:proton-transporting ATP synthase complex"/>
    <property type="evidence" value="ECO:0007669"/>
    <property type="project" value="UniProtKB-KW"/>
</dbReference>
<dbReference type="GO" id="GO:0005524">
    <property type="term" value="F:ATP binding"/>
    <property type="evidence" value="ECO:0007669"/>
    <property type="project" value="UniProtKB-UniRule"/>
</dbReference>
<dbReference type="GO" id="GO:0016887">
    <property type="term" value="F:ATP hydrolysis activity"/>
    <property type="evidence" value="ECO:0007669"/>
    <property type="project" value="InterPro"/>
</dbReference>
<dbReference type="GO" id="GO:0046933">
    <property type="term" value="F:proton-transporting ATP synthase activity, rotational mechanism"/>
    <property type="evidence" value="ECO:0007669"/>
    <property type="project" value="UniProtKB-UniRule"/>
</dbReference>
<dbReference type="CDD" id="cd18110">
    <property type="entry name" value="ATP-synt_F1_beta_C"/>
    <property type="match status" value="1"/>
</dbReference>
<dbReference type="CDD" id="cd18115">
    <property type="entry name" value="ATP-synt_F1_beta_N"/>
    <property type="match status" value="1"/>
</dbReference>
<dbReference type="CDD" id="cd01133">
    <property type="entry name" value="F1-ATPase_beta_CD"/>
    <property type="match status" value="1"/>
</dbReference>
<dbReference type="FunFam" id="1.10.1140.10:FF:000001">
    <property type="entry name" value="ATP synthase subunit beta"/>
    <property type="match status" value="1"/>
</dbReference>
<dbReference type="FunFam" id="2.40.10.170:FF:000005">
    <property type="entry name" value="ATP synthase subunit beta"/>
    <property type="match status" value="1"/>
</dbReference>
<dbReference type="FunFam" id="3.40.50.300:FF:000004">
    <property type="entry name" value="ATP synthase subunit beta"/>
    <property type="match status" value="1"/>
</dbReference>
<dbReference type="Gene3D" id="2.40.10.170">
    <property type="match status" value="1"/>
</dbReference>
<dbReference type="Gene3D" id="1.10.1140.10">
    <property type="entry name" value="Bovine Mitochondrial F1-atpase, Atp Synthase Beta Chain, Chain D, domain 3"/>
    <property type="match status" value="1"/>
</dbReference>
<dbReference type="Gene3D" id="3.40.50.300">
    <property type="entry name" value="P-loop containing nucleotide triphosphate hydrolases"/>
    <property type="match status" value="1"/>
</dbReference>
<dbReference type="HAMAP" id="MF_01347">
    <property type="entry name" value="ATP_synth_beta_bact"/>
    <property type="match status" value="1"/>
</dbReference>
<dbReference type="InterPro" id="IPR003593">
    <property type="entry name" value="AAA+_ATPase"/>
</dbReference>
<dbReference type="InterPro" id="IPR055190">
    <property type="entry name" value="ATP-synt_VA_C"/>
</dbReference>
<dbReference type="InterPro" id="IPR005722">
    <property type="entry name" value="ATP_synth_F1_bsu"/>
</dbReference>
<dbReference type="InterPro" id="IPR020003">
    <property type="entry name" value="ATPase_a/bsu_AS"/>
</dbReference>
<dbReference type="InterPro" id="IPR050053">
    <property type="entry name" value="ATPase_alpha/beta_chains"/>
</dbReference>
<dbReference type="InterPro" id="IPR004100">
    <property type="entry name" value="ATPase_F1/V1/A1_a/bsu_N"/>
</dbReference>
<dbReference type="InterPro" id="IPR036121">
    <property type="entry name" value="ATPase_F1/V1/A1_a/bsu_N_sf"/>
</dbReference>
<dbReference type="InterPro" id="IPR000194">
    <property type="entry name" value="ATPase_F1/V1/A1_a/bsu_nucl-bd"/>
</dbReference>
<dbReference type="InterPro" id="IPR024034">
    <property type="entry name" value="ATPase_F1/V1_b/a_C"/>
</dbReference>
<dbReference type="InterPro" id="IPR027417">
    <property type="entry name" value="P-loop_NTPase"/>
</dbReference>
<dbReference type="NCBIfam" id="TIGR01039">
    <property type="entry name" value="atpD"/>
    <property type="match status" value="1"/>
</dbReference>
<dbReference type="PANTHER" id="PTHR15184">
    <property type="entry name" value="ATP SYNTHASE"/>
    <property type="match status" value="1"/>
</dbReference>
<dbReference type="PANTHER" id="PTHR15184:SF71">
    <property type="entry name" value="ATP SYNTHASE SUBUNIT BETA, MITOCHONDRIAL"/>
    <property type="match status" value="1"/>
</dbReference>
<dbReference type="Pfam" id="PF00006">
    <property type="entry name" value="ATP-synt_ab"/>
    <property type="match status" value="1"/>
</dbReference>
<dbReference type="Pfam" id="PF02874">
    <property type="entry name" value="ATP-synt_ab_N"/>
    <property type="match status" value="1"/>
</dbReference>
<dbReference type="Pfam" id="PF22919">
    <property type="entry name" value="ATP-synt_VA_C"/>
    <property type="match status" value="1"/>
</dbReference>
<dbReference type="SMART" id="SM00382">
    <property type="entry name" value="AAA"/>
    <property type="match status" value="1"/>
</dbReference>
<dbReference type="SUPFAM" id="SSF47917">
    <property type="entry name" value="C-terminal domain of alpha and beta subunits of F1 ATP synthase"/>
    <property type="match status" value="1"/>
</dbReference>
<dbReference type="SUPFAM" id="SSF50615">
    <property type="entry name" value="N-terminal domain of alpha and beta subunits of F1 ATP synthase"/>
    <property type="match status" value="1"/>
</dbReference>
<dbReference type="SUPFAM" id="SSF52540">
    <property type="entry name" value="P-loop containing nucleoside triphosphate hydrolases"/>
    <property type="match status" value="1"/>
</dbReference>
<dbReference type="PROSITE" id="PS00152">
    <property type="entry name" value="ATPASE_ALPHA_BETA"/>
    <property type="match status" value="1"/>
</dbReference>